<protein>
    <recommendedName>
        <fullName evidence="1">Large ribosomal subunit protein uL13</fullName>
    </recommendedName>
    <alternativeName>
        <fullName evidence="2">50S ribosomal protein L13</fullName>
    </alternativeName>
</protein>
<feature type="chain" id="PRO_1000055394" description="Large ribosomal subunit protein uL13">
    <location>
        <begin position="1"/>
        <end position="142"/>
    </location>
</feature>
<comment type="function">
    <text evidence="1">This protein is one of the early assembly proteins of the 50S ribosomal subunit, although it is not seen to bind rRNA by itself. It is important during the early stages of 50S assembly.</text>
</comment>
<comment type="subunit">
    <text evidence="1">Part of the 50S ribosomal subunit.</text>
</comment>
<comment type="similarity">
    <text evidence="1">Belongs to the universal ribosomal protein uL13 family.</text>
</comment>
<proteinExistence type="inferred from homology"/>
<accession>A6SUN7</accession>
<sequence length="142" mass="15878">MKTFSAKGHEVQRDWFVIDATDKVLGRVASEVALRLRGKHKPEFTPHVDTGDFIVVINAGKLRVTGTKATEKTYYRHSGYPGGIYETNFLKMQQRFPGRALEKAVKGMLPKGPLGYAMIKKLKVYAEATHPHAAQQPKALEL</sequence>
<name>RL13_JANMA</name>
<dbReference type="EMBL" id="CP000269">
    <property type="protein sequence ID" value="ABR88804.1"/>
    <property type="molecule type" value="Genomic_DNA"/>
</dbReference>
<dbReference type="RefSeq" id="WP_012078159.1">
    <property type="nucleotide sequence ID" value="NC_009659.1"/>
</dbReference>
<dbReference type="SMR" id="A6SUN7"/>
<dbReference type="STRING" id="375286.mma_0294"/>
<dbReference type="KEGG" id="mms:mma_0294"/>
<dbReference type="eggNOG" id="COG0102">
    <property type="taxonomic scope" value="Bacteria"/>
</dbReference>
<dbReference type="HOGENOM" id="CLU_082184_2_2_4"/>
<dbReference type="OrthoDB" id="9801330at2"/>
<dbReference type="Proteomes" id="UP000006388">
    <property type="component" value="Chromosome"/>
</dbReference>
<dbReference type="GO" id="GO:0022625">
    <property type="term" value="C:cytosolic large ribosomal subunit"/>
    <property type="evidence" value="ECO:0007669"/>
    <property type="project" value="TreeGrafter"/>
</dbReference>
<dbReference type="GO" id="GO:0003729">
    <property type="term" value="F:mRNA binding"/>
    <property type="evidence" value="ECO:0007669"/>
    <property type="project" value="TreeGrafter"/>
</dbReference>
<dbReference type="GO" id="GO:0003735">
    <property type="term" value="F:structural constituent of ribosome"/>
    <property type="evidence" value="ECO:0007669"/>
    <property type="project" value="InterPro"/>
</dbReference>
<dbReference type="GO" id="GO:0017148">
    <property type="term" value="P:negative regulation of translation"/>
    <property type="evidence" value="ECO:0007669"/>
    <property type="project" value="TreeGrafter"/>
</dbReference>
<dbReference type="GO" id="GO:0006412">
    <property type="term" value="P:translation"/>
    <property type="evidence" value="ECO:0007669"/>
    <property type="project" value="UniProtKB-UniRule"/>
</dbReference>
<dbReference type="CDD" id="cd00392">
    <property type="entry name" value="Ribosomal_L13"/>
    <property type="match status" value="1"/>
</dbReference>
<dbReference type="FunFam" id="3.90.1180.10:FF:000001">
    <property type="entry name" value="50S ribosomal protein L13"/>
    <property type="match status" value="1"/>
</dbReference>
<dbReference type="Gene3D" id="3.90.1180.10">
    <property type="entry name" value="Ribosomal protein L13"/>
    <property type="match status" value="1"/>
</dbReference>
<dbReference type="HAMAP" id="MF_01366">
    <property type="entry name" value="Ribosomal_uL13"/>
    <property type="match status" value="1"/>
</dbReference>
<dbReference type="InterPro" id="IPR005822">
    <property type="entry name" value="Ribosomal_uL13"/>
</dbReference>
<dbReference type="InterPro" id="IPR005823">
    <property type="entry name" value="Ribosomal_uL13_bac-type"/>
</dbReference>
<dbReference type="InterPro" id="IPR036899">
    <property type="entry name" value="Ribosomal_uL13_sf"/>
</dbReference>
<dbReference type="NCBIfam" id="TIGR01066">
    <property type="entry name" value="rplM_bact"/>
    <property type="match status" value="1"/>
</dbReference>
<dbReference type="PANTHER" id="PTHR11545:SF2">
    <property type="entry name" value="LARGE RIBOSOMAL SUBUNIT PROTEIN UL13M"/>
    <property type="match status" value="1"/>
</dbReference>
<dbReference type="PANTHER" id="PTHR11545">
    <property type="entry name" value="RIBOSOMAL PROTEIN L13"/>
    <property type="match status" value="1"/>
</dbReference>
<dbReference type="Pfam" id="PF00572">
    <property type="entry name" value="Ribosomal_L13"/>
    <property type="match status" value="1"/>
</dbReference>
<dbReference type="PIRSF" id="PIRSF002181">
    <property type="entry name" value="Ribosomal_L13"/>
    <property type="match status" value="1"/>
</dbReference>
<dbReference type="SUPFAM" id="SSF52161">
    <property type="entry name" value="Ribosomal protein L13"/>
    <property type="match status" value="1"/>
</dbReference>
<reference key="1">
    <citation type="journal article" date="2007" name="PLoS Genet.">
        <title>Genome analysis of Minibacterium massiliensis highlights the convergent evolution of water-living bacteria.</title>
        <authorList>
            <person name="Audic S."/>
            <person name="Robert C."/>
            <person name="Campagna B."/>
            <person name="Parinello H."/>
            <person name="Claverie J.-M."/>
            <person name="Raoult D."/>
            <person name="Drancourt M."/>
        </authorList>
    </citation>
    <scope>NUCLEOTIDE SEQUENCE [LARGE SCALE GENOMIC DNA]</scope>
    <source>
        <strain>Marseille</strain>
    </source>
</reference>
<gene>
    <name evidence="1" type="primary">rplM</name>
    <name type="ordered locus">mma_0294</name>
</gene>
<organism>
    <name type="scientific">Janthinobacterium sp. (strain Marseille)</name>
    <name type="common">Minibacterium massiliensis</name>
    <dbReference type="NCBI Taxonomy" id="375286"/>
    <lineage>
        <taxon>Bacteria</taxon>
        <taxon>Pseudomonadati</taxon>
        <taxon>Pseudomonadota</taxon>
        <taxon>Betaproteobacteria</taxon>
        <taxon>Burkholderiales</taxon>
        <taxon>Oxalobacteraceae</taxon>
        <taxon>Janthinobacterium</taxon>
    </lineage>
</organism>
<keyword id="KW-0687">Ribonucleoprotein</keyword>
<keyword id="KW-0689">Ribosomal protein</keyword>
<evidence type="ECO:0000255" key="1">
    <source>
        <dbReference type="HAMAP-Rule" id="MF_01366"/>
    </source>
</evidence>
<evidence type="ECO:0000305" key="2"/>